<reference key="1">
    <citation type="journal article" date="1987" name="Mol. Endocrinol.">
        <title>Molecular cloning and expression of mouse placental lactogen I complementary deoxyribonucleic acid.</title>
        <authorList>
            <person name="Colosi P."/>
            <person name="Talamantes F."/>
            <person name="Linzer D.I.H."/>
        </authorList>
    </citation>
    <scope>NUCLEOTIDE SEQUENCE [MRNA]</scope>
</reference>
<reference key="2">
    <citation type="journal article" date="1993" name="Mol. Endocrinol.">
        <title>Trophoblast-specific transcription from the mouse placental lactogen-I gene promoter.</title>
        <authorList>
            <person name="Shida M.M."/>
            <person name="Ng Y.K."/>
            <person name="Soares M.J."/>
            <person name="Linzer D.I.H."/>
        </authorList>
    </citation>
    <scope>NUCLEOTIDE SEQUENCE [GENOMIC DNA] OF 1-10</scope>
    <source>
        <strain>BALB/cJ</strain>
    </source>
</reference>
<reference key="3">
    <citation type="journal article" date="1994" name="Mamm. Genome">
        <title>Genetic mapping of 40 cDNA clones on the mouse genome by PCR.</title>
        <authorList>
            <person name="Ko M.S."/>
            <person name="Wang X."/>
            <person name="Horton J.H."/>
            <person name="Hagen M.D."/>
            <person name="Takahashi N."/>
            <person name="Maezaki Y."/>
            <person name="Nadeau J.H."/>
        </authorList>
    </citation>
    <scope>NUCLEOTIDE SEQUENCE [GENOMIC DNA] OF 210-224</scope>
    <source>
        <strain>C57BL/6J</strain>
    </source>
</reference>
<evidence type="ECO:0000250" key="1"/>
<evidence type="ECO:0000255" key="2"/>
<evidence type="ECO:0000305" key="3"/>
<comment type="subcellular location">
    <subcellularLocation>
        <location>Secreted</location>
    </subcellularLocation>
</comment>
<comment type="developmental stage">
    <text>Placental lactogen I is expressed in mid-pregnancy, while placental lactogen II is expressed throughout the later half of pregnancy.</text>
</comment>
<comment type="similarity">
    <text evidence="3">Belongs to the somatotropin/prolactin family.</text>
</comment>
<keyword id="KW-1015">Disulfide bond</keyword>
<keyword id="KW-0325">Glycoprotein</keyword>
<keyword id="KW-0372">Hormone</keyword>
<keyword id="KW-1185">Reference proteome</keyword>
<keyword id="KW-0964">Secreted</keyword>
<keyword id="KW-0732">Signal</keyword>
<feature type="signal peptide" evidence="1">
    <location>
        <begin position="1"/>
        <end position="29"/>
    </location>
</feature>
<feature type="chain" id="PRO_0000032960" description="Prolactin-3D1">
    <location>
        <begin position="30"/>
        <end position="224"/>
    </location>
</feature>
<feature type="glycosylation site" description="N-linked (GlcNAc...) asparagine" evidence="2">
    <location>
        <position position="109"/>
    </location>
</feature>
<feature type="glycosylation site" description="N-linked (GlcNAc...) asparagine" evidence="2">
    <location>
        <position position="158"/>
    </location>
</feature>
<feature type="disulfide bond" evidence="1">
    <location>
        <begin position="81"/>
        <end position="199"/>
    </location>
</feature>
<feature type="disulfide bond" evidence="1">
    <location>
        <begin position="216"/>
        <end position="224"/>
    </location>
</feature>
<organism>
    <name type="scientific">Mus musculus</name>
    <name type="common">Mouse</name>
    <dbReference type="NCBI Taxonomy" id="10090"/>
    <lineage>
        <taxon>Eukaryota</taxon>
        <taxon>Metazoa</taxon>
        <taxon>Chordata</taxon>
        <taxon>Craniata</taxon>
        <taxon>Vertebrata</taxon>
        <taxon>Euteleostomi</taxon>
        <taxon>Mammalia</taxon>
        <taxon>Eutheria</taxon>
        <taxon>Euarchontoglires</taxon>
        <taxon>Glires</taxon>
        <taxon>Rodentia</taxon>
        <taxon>Myomorpha</taxon>
        <taxon>Muroidea</taxon>
        <taxon>Muridae</taxon>
        <taxon>Murinae</taxon>
        <taxon>Mus</taxon>
        <taxon>Mus</taxon>
    </lineage>
</organism>
<gene>
    <name type="primary">Prl3d1</name>
    <name type="synonym">Csh1</name>
    <name type="synonym">Pl-1</name>
    <name type="synonym">Pl1</name>
</gene>
<sequence length="224" mass="25524">MQLTLNLSGSAGMQLLLLVSSLLLWENVSSKPTAMVPTEDLYTRLAELLHNTFILAADVYREFDLDFFDKTWITDRTLPLCHTASIHTPENREEVHETKTEDLLKAMINVSISWKEPLKHLVSALTALPGASESMGKKAADIKGRNLVILEGLQTIYNRSQANIEENENFDYPAWSGLEELQSPNEDTHLFAVYNLCRCIKRDIHKIDSYIKVLRCRVVFQNEC</sequence>
<name>PR3D1_MOUSE</name>
<proteinExistence type="evidence at transcript level"/>
<dbReference type="EMBL" id="M35662">
    <property type="protein sequence ID" value="AAA39404.1"/>
    <property type="molecule type" value="mRNA"/>
</dbReference>
<dbReference type="EMBL" id="S58124">
    <property type="status" value="NOT_ANNOTATED_CDS"/>
    <property type="molecule type" value="Genomic_DNA"/>
</dbReference>
<dbReference type="EMBL" id="U05734">
    <property type="protein sequence ID" value="AAB60475.1"/>
    <property type="molecule type" value="Genomic_DNA"/>
</dbReference>
<dbReference type="CCDS" id="CCDS56874.1"/>
<dbReference type="PIR" id="A40062">
    <property type="entry name" value="A40062"/>
</dbReference>
<dbReference type="SMR" id="P18121"/>
<dbReference type="FunCoup" id="P18121">
    <property type="interactions" value="242"/>
</dbReference>
<dbReference type="STRING" id="10090.ENSMUSP00000152890"/>
<dbReference type="GlyCosmos" id="P18121">
    <property type="glycosylation" value="2 sites, No reported glycans"/>
</dbReference>
<dbReference type="GlyGen" id="P18121">
    <property type="glycosylation" value="2 sites"/>
</dbReference>
<dbReference type="iPTMnet" id="P18121"/>
<dbReference type="PhosphoSitePlus" id="P18121"/>
<dbReference type="PaxDb" id="10090-ENSMUSP00000080731"/>
<dbReference type="AGR" id="MGI:97606"/>
<dbReference type="MGI" id="MGI:97606">
    <property type="gene designation" value="Prl3d1"/>
</dbReference>
<dbReference type="eggNOG" id="ENOG502QYU3">
    <property type="taxonomic scope" value="Eukaryota"/>
</dbReference>
<dbReference type="InParanoid" id="P18121"/>
<dbReference type="PhylomeDB" id="P18121"/>
<dbReference type="ChiTaRS" id="Prl3d1">
    <property type="organism name" value="mouse"/>
</dbReference>
<dbReference type="PRO" id="PR:P18121"/>
<dbReference type="Proteomes" id="UP000000589">
    <property type="component" value="Unplaced"/>
</dbReference>
<dbReference type="RNAct" id="P18121">
    <property type="molecule type" value="protein"/>
</dbReference>
<dbReference type="GO" id="GO:0005615">
    <property type="term" value="C:extracellular space"/>
    <property type="evidence" value="ECO:0000314"/>
    <property type="project" value="MGI"/>
</dbReference>
<dbReference type="GO" id="GO:0005179">
    <property type="term" value="F:hormone activity"/>
    <property type="evidence" value="ECO:0007669"/>
    <property type="project" value="UniProtKB-KW"/>
</dbReference>
<dbReference type="CDD" id="cd10288">
    <property type="entry name" value="prolactin_like"/>
    <property type="match status" value="1"/>
</dbReference>
<dbReference type="FunFam" id="1.20.1250.10:FF:000043">
    <property type="entry name" value="Growth hormone d5"/>
    <property type="match status" value="1"/>
</dbReference>
<dbReference type="Gene3D" id="1.20.1250.10">
    <property type="match status" value="1"/>
</dbReference>
<dbReference type="InterPro" id="IPR009079">
    <property type="entry name" value="4_helix_cytokine-like_core"/>
</dbReference>
<dbReference type="InterPro" id="IPR001400">
    <property type="entry name" value="Somatotropin/Prolactin"/>
</dbReference>
<dbReference type="InterPro" id="IPR018116">
    <property type="entry name" value="Somatotropin_CS"/>
</dbReference>
<dbReference type="PANTHER" id="PTHR11417:SF31">
    <property type="entry name" value="GROWTH HORMONE D5-RELATED"/>
    <property type="match status" value="1"/>
</dbReference>
<dbReference type="PANTHER" id="PTHR11417">
    <property type="entry name" value="SOMATOTROPIN,PROLACTIN"/>
    <property type="match status" value="1"/>
</dbReference>
<dbReference type="Pfam" id="PF00103">
    <property type="entry name" value="Hormone_1"/>
    <property type="match status" value="1"/>
</dbReference>
<dbReference type="PRINTS" id="PR00836">
    <property type="entry name" value="SOMATOTROPIN"/>
</dbReference>
<dbReference type="SUPFAM" id="SSF47266">
    <property type="entry name" value="4-helical cytokines"/>
    <property type="match status" value="1"/>
</dbReference>
<dbReference type="PROSITE" id="PS00266">
    <property type="entry name" value="SOMATOTROPIN_1"/>
    <property type="match status" value="1"/>
</dbReference>
<dbReference type="PROSITE" id="PS00338">
    <property type="entry name" value="SOMATOTROPIN_2"/>
    <property type="match status" value="1"/>
</dbReference>
<accession>P18121</accession>
<protein>
    <recommendedName>
        <fullName>Prolactin-3D1</fullName>
    </recommendedName>
    <alternativeName>
        <fullName>Chorionic somatomammotropin hormone 1</fullName>
    </alternativeName>
    <alternativeName>
        <fullName>Placental lactogen I</fullName>
        <shortName>PL-I</shortName>
    </alternativeName>
</protein>